<comment type="function">
    <text>Major component of the vertebrate myofibrillar M band. Binds myosin, titin, and light meromyosin. This binding is dose dependent.</text>
</comment>
<comment type="subunit">
    <text evidence="1">Interacts with TTN/titin.</text>
</comment>
<comment type="interaction">
    <interactant intactId="EBI-5357134">
        <id>P54296</id>
    </interactant>
    <interactant intactId="EBI-2799016">
        <id>O75923</id>
        <label>DYSF</label>
    </interactant>
    <organismsDiffer>false</organismsDiffer>
    <experiments>3</experiments>
</comment>
<comment type="subcellular location">
    <subcellularLocation>
        <location evidence="1">Cytoplasm</location>
        <location evidence="1">Myofibril</location>
        <location evidence="1">Sarcomere</location>
        <location evidence="1">M line</location>
    </subcellularLocation>
</comment>
<evidence type="ECO:0000250" key="1"/>
<evidence type="ECO:0000255" key="2">
    <source>
        <dbReference type="PROSITE-ProRule" id="PRU00316"/>
    </source>
</evidence>
<evidence type="ECO:0000256" key="3">
    <source>
        <dbReference type="SAM" id="MobiDB-lite"/>
    </source>
</evidence>
<evidence type="ECO:0000269" key="4">
    <source>
    </source>
</evidence>
<evidence type="ECO:0000269" key="5">
    <source>
    </source>
</evidence>
<evidence type="ECO:0000305" key="6"/>
<gene>
    <name type="primary">MYOM2</name>
</gene>
<accession>P54296</accession>
<accession>Q7Z3Y2</accession>
<organism>
    <name type="scientific">Homo sapiens</name>
    <name type="common">Human</name>
    <dbReference type="NCBI Taxonomy" id="9606"/>
    <lineage>
        <taxon>Eukaryota</taxon>
        <taxon>Metazoa</taxon>
        <taxon>Chordata</taxon>
        <taxon>Craniata</taxon>
        <taxon>Vertebrata</taxon>
        <taxon>Euteleostomi</taxon>
        <taxon>Mammalia</taxon>
        <taxon>Eutheria</taxon>
        <taxon>Euarchontoglires</taxon>
        <taxon>Primates</taxon>
        <taxon>Haplorrhini</taxon>
        <taxon>Catarrhini</taxon>
        <taxon>Hominidae</taxon>
        <taxon>Homo</taxon>
    </lineage>
</organism>
<reference key="1">
    <citation type="journal article" date="1993" name="J. Cell Sci.">
        <title>The globular head domain of titin extends into the center of the sarcomeric M band. cDNA cloning, epitope mapping and immunoelectron microscopy of two titin-associated proteins.</title>
        <authorList>
            <person name="Vinkemeier U."/>
            <person name="Obermann W."/>
            <person name="Weber K."/>
            <person name="Fuerst D.O."/>
        </authorList>
    </citation>
    <scope>NUCLEOTIDE SEQUENCE [MRNA]</scope>
    <scope>VARIANTS LEU-321 AND ALA-1168</scope>
    <source>
        <tissue>Skeletal muscle</tissue>
    </source>
</reference>
<reference key="2">
    <citation type="journal article" date="2006" name="Nature">
        <title>DNA sequence and analysis of human chromosome 8.</title>
        <authorList>
            <person name="Nusbaum C."/>
            <person name="Mikkelsen T.S."/>
            <person name="Zody M.C."/>
            <person name="Asakawa S."/>
            <person name="Taudien S."/>
            <person name="Garber M."/>
            <person name="Kodira C.D."/>
            <person name="Schueler M.G."/>
            <person name="Shimizu A."/>
            <person name="Whittaker C.A."/>
            <person name="Chang J.L."/>
            <person name="Cuomo C.A."/>
            <person name="Dewar K."/>
            <person name="FitzGerald M.G."/>
            <person name="Yang X."/>
            <person name="Allen N.R."/>
            <person name="Anderson S."/>
            <person name="Asakawa T."/>
            <person name="Blechschmidt K."/>
            <person name="Bloom T."/>
            <person name="Borowsky M.L."/>
            <person name="Butler J."/>
            <person name="Cook A."/>
            <person name="Corum B."/>
            <person name="DeArellano K."/>
            <person name="DeCaprio D."/>
            <person name="Dooley K.T."/>
            <person name="Dorris L. III"/>
            <person name="Engels R."/>
            <person name="Gloeckner G."/>
            <person name="Hafez N."/>
            <person name="Hagopian D.S."/>
            <person name="Hall J.L."/>
            <person name="Ishikawa S.K."/>
            <person name="Jaffe D.B."/>
            <person name="Kamat A."/>
            <person name="Kudoh J."/>
            <person name="Lehmann R."/>
            <person name="Lokitsang T."/>
            <person name="Macdonald P."/>
            <person name="Major J.E."/>
            <person name="Matthews C.D."/>
            <person name="Mauceli E."/>
            <person name="Menzel U."/>
            <person name="Mihalev A.H."/>
            <person name="Minoshima S."/>
            <person name="Murayama Y."/>
            <person name="Naylor J.W."/>
            <person name="Nicol R."/>
            <person name="Nguyen C."/>
            <person name="O'Leary S.B."/>
            <person name="O'Neill K."/>
            <person name="Parker S.C.J."/>
            <person name="Polley A."/>
            <person name="Raymond C.K."/>
            <person name="Reichwald K."/>
            <person name="Rodriguez J."/>
            <person name="Sasaki T."/>
            <person name="Schilhabel M."/>
            <person name="Siddiqui R."/>
            <person name="Smith C.L."/>
            <person name="Sneddon T.P."/>
            <person name="Talamas J.A."/>
            <person name="Tenzin P."/>
            <person name="Topham K."/>
            <person name="Venkataraman V."/>
            <person name="Wen G."/>
            <person name="Yamazaki S."/>
            <person name="Young S.K."/>
            <person name="Zeng Q."/>
            <person name="Zimmer A.R."/>
            <person name="Rosenthal A."/>
            <person name="Birren B.W."/>
            <person name="Platzer M."/>
            <person name="Shimizu N."/>
            <person name="Lander E.S."/>
        </authorList>
    </citation>
    <scope>NUCLEOTIDE SEQUENCE [LARGE SCALE GENOMIC DNA]</scope>
</reference>
<reference key="3">
    <citation type="journal article" date="2004" name="Genome Res.">
        <title>The status, quality, and expansion of the NIH full-length cDNA project: the Mammalian Gene Collection (MGC).</title>
        <authorList>
            <consortium name="The MGC Project Team"/>
        </authorList>
    </citation>
    <scope>NUCLEOTIDE SEQUENCE [LARGE SCALE MRNA]</scope>
    <scope>VARIANTS MET-776 AND ALA-1168</scope>
    <source>
        <tissue>PNS</tissue>
    </source>
</reference>
<name>MYOM2_HUMAN</name>
<keyword id="KW-0963">Cytoplasm</keyword>
<keyword id="KW-0393">Immunoglobulin domain</keyword>
<keyword id="KW-0514">Muscle protein</keyword>
<keyword id="KW-1267">Proteomics identification</keyword>
<keyword id="KW-1185">Reference proteome</keyword>
<keyword id="KW-0677">Repeat</keyword>
<keyword id="KW-0787">Thick filament</keyword>
<sequence>MSLVTVPFYQKRHRHFDQSYRNIQTRYLLDEYASKKRASTQASSQKSLSQRSSSQRASSQTSLGGTICRVCAKRVSTQEDEEQENRSRYQSLVAAYGEAKRQRFLSELAHLEEDVHLARSQARDKLDKYAIQQMMEDKLAWERHTFEERISRAPEILVRLRSHTVWERMSVKLCFTVQGFPTPVVQWYKDGSLICQAAEPGKYRIESNYGVHTLEINRADFDDTATYSAVATNAHGQVSTNAAVVVRRFRGDEEPFRSVGLPIGLPLSSMIPYTHFDVQFLEKFGVTFRREGETVTLKCTMLVTPDLKRVQPRAEWYRDDVLLKESKWTKMFFGEGQASLSFSHLHKDDEGLYTLRIVSRGGVSDHSAFLFVRDADPLVTGAPGAPMDLQCHDANRDYVIVTWKPPNTTTESPVMGYFVDRCEVGTNNWVQCNDAPVKICKYPVTGLFEGRSYIFRVRAVNSAGISRPSRVSDAVAALDPLDLRRLQAVHLEGEKEIAIYQDDLEGDAQVPGPPTGVHASEISRNYVVLSWEPPTPRGKDPLMYFIEKSVVGSGSWQRVNAQTAVRSPRYAVFDLMEGKSYVFRVLSANRHGLSEPSEITSPIQAQDVTVVPSAPGRVLASRNTKTSVVVQWDRPKHEEDLLGYYVDCCVAGTNLWEPCNHKPIGYNRFVVHGLTTGEQYIFRVKAVNAVGMSENSQESDVIKVQAALTVPSHPYGITLLNCDGHSMTLGWKVPKFSGGSPILGYYLDKREVHHKNWHEVNSSPSKPTILTVDGLTEGSLYEFKIAAVNLAGIGEPSDPSEHFKCEAWTMPEPGPAYDLTFCEVRDTSLVMLWKAPVYSGSSPVSGYFVDFREEDAGEWITVNQTTTASRYLKVSDLQQGKTYVFRVRAVNANGVGKPSDTSEPVLVEARPGTKEISAGVDEQGNIYLGFDCQEMTDASQFTWCKSYEEISDDERFKIETVGDHSKLYLKNPDKEDLGTYSVSVSDTDGVSSSFVLDPEELERLMALSNEIKNPTIPLKSELAYEIFDKGRVRFWLQAEHLSPDASYRFIINDREVSDSEIHRIKCDKATGIIEMVMDRFSIENEGTYTVQIHDGKAKSQSSLVLIGDAFKTVLEEAEFQRKEFLRKQGPHFAEYLHWDVTEECEVRLVCKVANTKKETVFKWLKDDVLYETETLPNLERGICELLIPKLSKKDHGEYKATLKDDRGQDVSILEIAGKVYDDMILAMSRVCGKSASPLKVLCTPEGIRLQCFMKYFTDEMKVNWCHKDAKISSSEHMRIGGSEEMAWLQICEPTEKDKGKYTFEIFDGKDNHQRSLDLSGQAFDEAFAEFQQFKAAAFAEKNRGRLIGGLPDVVTIMEGKTLNLTCTVFGNPDPEVIWFKNDQDIQLSEHFSVKVEQAKYVSMTIKGVTSEDSGKYSINIKNKYGGEKIDVTVSVYKHGEKIPDMAPPQQAKPKLIPASASAAGQ</sequence>
<proteinExistence type="evidence at protein level"/>
<feature type="chain" id="PRO_0000072686" description="Myomesin-2">
    <location>
        <begin position="1"/>
        <end position="1465"/>
    </location>
</feature>
<feature type="domain" description="Ig-like C2-type 1">
    <location>
        <begin position="154"/>
        <end position="245"/>
    </location>
</feature>
<feature type="domain" description="Ig-like C2-type 2">
    <location>
        <begin position="266"/>
        <end position="371"/>
    </location>
</feature>
<feature type="domain" description="Fibronectin type-III 1" evidence="2">
    <location>
        <begin position="385"/>
        <end position="480"/>
    </location>
</feature>
<feature type="domain" description="Fibronectin type-III 2" evidence="2">
    <location>
        <begin position="513"/>
        <end position="608"/>
    </location>
</feature>
<feature type="domain" description="Fibronectin type-III 3" evidence="2">
    <location>
        <begin position="614"/>
        <end position="707"/>
    </location>
</feature>
<feature type="domain" description="Fibronectin type-III 4" evidence="2">
    <location>
        <begin position="710"/>
        <end position="812"/>
    </location>
</feature>
<feature type="domain" description="Fibronectin type-III 5" evidence="2">
    <location>
        <begin position="815"/>
        <end position="912"/>
    </location>
</feature>
<feature type="domain" description="Ig-like C2-type 3">
    <location>
        <begin position="904"/>
        <end position="1002"/>
    </location>
</feature>
<feature type="domain" description="Ig-like C2-type 4">
    <location>
        <begin position="1130"/>
        <end position="1211"/>
    </location>
</feature>
<feature type="domain" description="Ig-like C2-type 5">
    <location>
        <begin position="1345"/>
        <end position="1434"/>
    </location>
</feature>
<feature type="region of interest" description="Disordered" evidence="3">
    <location>
        <begin position="38"/>
        <end position="61"/>
    </location>
</feature>
<feature type="region of interest" description="Disordered" evidence="3">
    <location>
        <begin position="1442"/>
        <end position="1465"/>
    </location>
</feature>
<feature type="compositionally biased region" description="Low complexity" evidence="3">
    <location>
        <begin position="41"/>
        <end position="61"/>
    </location>
</feature>
<feature type="sequence variant" id="VAR_033613" description="In dbSNP:rs35985218.">
    <original>E</original>
    <variation>K</variation>
    <location>
        <position position="81"/>
    </location>
</feature>
<feature type="sequence variant" id="VAR_033614" description="In dbSNP:rs17064618.">
    <original>T</original>
    <variation>M</variation>
    <location>
        <position position="182"/>
    </location>
</feature>
<feature type="sequence variant" id="VAR_033615" description="In dbSNP:rs2272720." evidence="5">
    <original>V</original>
    <variation>L</variation>
    <location>
        <position position="321"/>
    </location>
</feature>
<feature type="sequence variant" id="VAR_033616" description="In dbSNP:rs34316994.">
    <original>V</original>
    <variation>I</variation>
    <location>
        <position position="363"/>
    </location>
</feature>
<feature type="sequence variant" id="VAR_033617" description="In dbSNP:rs36089594.">
    <original>S</original>
    <variation>Y</variation>
    <location>
        <position position="601"/>
    </location>
</feature>
<feature type="sequence variant" id="VAR_033618" description="In dbSNP:rs35335787.">
    <original>V</original>
    <variation>I</variation>
    <location>
        <position position="701"/>
    </location>
</feature>
<feature type="sequence variant" id="VAR_020083" description="In dbSNP:rs2294066." evidence="4">
    <original>T</original>
    <variation>M</variation>
    <location>
        <position position="776"/>
    </location>
</feature>
<feature type="sequence variant" id="VAR_054501" description="In dbSNP:rs968381.">
    <original>S</original>
    <variation>N</variation>
    <location>
        <position position="869"/>
    </location>
</feature>
<feature type="sequence variant" id="VAR_020084" description="In dbSNP:rs2280896.">
    <original>L</original>
    <variation>F</variation>
    <location>
        <position position="1022"/>
    </location>
</feature>
<feature type="sequence variant" id="VAR_061320" description="In dbSNP:rs17854780." evidence="4 5">
    <original>V</original>
    <variation>A</variation>
    <location>
        <position position="1168"/>
    </location>
</feature>
<feature type="sequence variant" id="VAR_033619" description="In dbSNP:rs34735757.">
    <original>E</original>
    <variation>D</variation>
    <location>
        <position position="1284"/>
    </location>
</feature>
<feature type="sequence conflict" description="In Ref. 1; CAA48832." evidence="6" ref="1">
    <original>QR</original>
    <variation>HG</variation>
    <location>
        <begin position="102"/>
        <end position="103"/>
    </location>
</feature>
<feature type="sequence conflict" description="In Ref. 1; CAA48832." evidence="6" ref="1">
    <original>S</original>
    <variation>T</variation>
    <location>
        <position position="364"/>
    </location>
</feature>
<feature type="sequence conflict" description="In Ref. 1; CAA48832." evidence="6" ref="1">
    <original>S</original>
    <variation>T</variation>
    <location>
        <position position="555"/>
    </location>
</feature>
<feature type="sequence conflict" description="In Ref. 1; CAA48832." evidence="6" ref="1">
    <original>N</original>
    <variation>D</variation>
    <location>
        <position position="863"/>
    </location>
</feature>
<protein>
    <recommendedName>
        <fullName>Myomesin-2</fullName>
    </recommendedName>
    <alternativeName>
        <fullName>165 kDa connectin-associated protein</fullName>
    </alternativeName>
    <alternativeName>
        <fullName>165 kDa titin-associated protein</fullName>
    </alternativeName>
    <alternativeName>
        <fullName>M-protein</fullName>
    </alternativeName>
    <alternativeName>
        <fullName>Myomesin family member 2</fullName>
    </alternativeName>
</protein>
<dbReference type="EMBL" id="X69089">
    <property type="protein sequence ID" value="CAA48832.1"/>
    <property type="molecule type" value="mRNA"/>
</dbReference>
<dbReference type="EMBL" id="AC245164">
    <property type="status" value="NOT_ANNOTATED_CDS"/>
    <property type="molecule type" value="Genomic_DNA"/>
</dbReference>
<dbReference type="EMBL" id="BC052969">
    <property type="protein sequence ID" value="AAH52969.1"/>
    <property type="molecule type" value="mRNA"/>
</dbReference>
<dbReference type="CCDS" id="CCDS5957.1"/>
<dbReference type="PIR" id="S43529">
    <property type="entry name" value="S43529"/>
</dbReference>
<dbReference type="RefSeq" id="NP_003961.3">
    <property type="nucleotide sequence ID" value="NM_003970.4"/>
</dbReference>
<dbReference type="SMR" id="P54296"/>
<dbReference type="BioGRID" id="114612">
    <property type="interactions" value="30"/>
</dbReference>
<dbReference type="FunCoup" id="P54296">
    <property type="interactions" value="455"/>
</dbReference>
<dbReference type="IntAct" id="P54296">
    <property type="interactions" value="23"/>
</dbReference>
<dbReference type="MINT" id="P54296"/>
<dbReference type="STRING" id="9606.ENSP00000262113"/>
<dbReference type="GlyGen" id="P54296">
    <property type="glycosylation" value="3 sites, 1 O-linked glycan (2 sites)"/>
</dbReference>
<dbReference type="iPTMnet" id="P54296"/>
<dbReference type="PhosphoSitePlus" id="P54296"/>
<dbReference type="BioMuta" id="MYOM2"/>
<dbReference type="DMDM" id="224471842"/>
<dbReference type="jPOST" id="P54296"/>
<dbReference type="MassIVE" id="P54296"/>
<dbReference type="PaxDb" id="9606-ENSP00000262113"/>
<dbReference type="PeptideAtlas" id="P54296"/>
<dbReference type="ProteomicsDB" id="56680"/>
<dbReference type="Pumba" id="P54296"/>
<dbReference type="Antibodypedia" id="940">
    <property type="antibodies" value="139 antibodies from 26 providers"/>
</dbReference>
<dbReference type="DNASU" id="9172"/>
<dbReference type="Ensembl" id="ENST00000262113.9">
    <property type="protein sequence ID" value="ENSP00000262113.4"/>
    <property type="gene ID" value="ENSG00000036448.10"/>
</dbReference>
<dbReference type="Ensembl" id="ENST00000616680.2">
    <property type="protein sequence ID" value="ENSP00000478322.1"/>
    <property type="gene ID" value="ENSG00000274137.2"/>
</dbReference>
<dbReference type="GeneID" id="9172"/>
<dbReference type="KEGG" id="hsa:9172"/>
<dbReference type="MANE-Select" id="ENST00000262113.9">
    <property type="protein sequence ID" value="ENSP00000262113.4"/>
    <property type="RefSeq nucleotide sequence ID" value="NM_003970.4"/>
    <property type="RefSeq protein sequence ID" value="NP_003961.3"/>
</dbReference>
<dbReference type="UCSC" id="uc033azy.2">
    <property type="organism name" value="human"/>
</dbReference>
<dbReference type="AGR" id="HGNC:7614"/>
<dbReference type="CTD" id="9172"/>
<dbReference type="DisGeNET" id="9172"/>
<dbReference type="GeneCards" id="MYOM2"/>
<dbReference type="HGNC" id="HGNC:7614">
    <property type="gene designation" value="MYOM2"/>
</dbReference>
<dbReference type="HPA" id="ENSG00000036448">
    <property type="expression patterns" value="Group enriched (heart muscle, skeletal muscle)"/>
</dbReference>
<dbReference type="MIM" id="603509">
    <property type="type" value="gene"/>
</dbReference>
<dbReference type="neXtProt" id="NX_P54296"/>
<dbReference type="OpenTargets" id="ENSG00000036448"/>
<dbReference type="PharmGKB" id="PA31419"/>
<dbReference type="VEuPathDB" id="HostDB:ENSG00000036448"/>
<dbReference type="eggNOG" id="ENOG502QS6D">
    <property type="taxonomic scope" value="Eukaryota"/>
</dbReference>
<dbReference type="GeneTree" id="ENSGT00940000157057"/>
<dbReference type="HOGENOM" id="CLU_004753_1_0_1"/>
<dbReference type="InParanoid" id="P54296"/>
<dbReference type="OMA" id="ASFRFVI"/>
<dbReference type="OrthoDB" id="504170at2759"/>
<dbReference type="PAN-GO" id="P54296">
    <property type="GO annotations" value="3 GO annotations based on evolutionary models"/>
</dbReference>
<dbReference type="PhylomeDB" id="P54296"/>
<dbReference type="TreeFam" id="TF331825"/>
<dbReference type="PathwayCommons" id="P54296"/>
<dbReference type="SignaLink" id="P54296"/>
<dbReference type="SIGNOR" id="P54296"/>
<dbReference type="BioGRID-ORCS" id="9172">
    <property type="hits" value="7 hits in 1145 CRISPR screens"/>
</dbReference>
<dbReference type="ChiTaRS" id="MYOM2">
    <property type="organism name" value="human"/>
</dbReference>
<dbReference type="GeneWiki" id="MYOM2"/>
<dbReference type="GenomeRNAi" id="9172"/>
<dbReference type="Pharos" id="P54296">
    <property type="development level" value="Tbio"/>
</dbReference>
<dbReference type="PRO" id="PR:P54296"/>
<dbReference type="Proteomes" id="UP000005640">
    <property type="component" value="Chromosome 8"/>
</dbReference>
<dbReference type="RNAct" id="P54296">
    <property type="molecule type" value="protein"/>
</dbReference>
<dbReference type="Bgee" id="ENSG00000036448">
    <property type="expression patterns" value="Expressed in apex of heart and 104 other cell types or tissues"/>
</dbReference>
<dbReference type="ExpressionAtlas" id="P54296">
    <property type="expression patterns" value="baseline and differential"/>
</dbReference>
<dbReference type="GO" id="GO:0031430">
    <property type="term" value="C:M band"/>
    <property type="evidence" value="ECO:0000318"/>
    <property type="project" value="GO_Central"/>
</dbReference>
<dbReference type="GO" id="GO:0005739">
    <property type="term" value="C:mitochondrion"/>
    <property type="evidence" value="ECO:0007005"/>
    <property type="project" value="UniProtKB"/>
</dbReference>
<dbReference type="GO" id="GO:0032982">
    <property type="term" value="C:myosin filament"/>
    <property type="evidence" value="ECO:0007669"/>
    <property type="project" value="UniProtKB-KW"/>
</dbReference>
<dbReference type="GO" id="GO:0019900">
    <property type="term" value="F:kinase binding"/>
    <property type="evidence" value="ECO:0000353"/>
    <property type="project" value="CAFA"/>
</dbReference>
<dbReference type="GO" id="GO:0008307">
    <property type="term" value="F:structural constituent of muscle"/>
    <property type="evidence" value="ECO:0000304"/>
    <property type="project" value="ProtInc"/>
</dbReference>
<dbReference type="GO" id="GO:0002074">
    <property type="term" value="P:extraocular skeletal muscle development"/>
    <property type="evidence" value="ECO:0007669"/>
    <property type="project" value="Ensembl"/>
</dbReference>
<dbReference type="GO" id="GO:0006936">
    <property type="term" value="P:muscle contraction"/>
    <property type="evidence" value="ECO:0000304"/>
    <property type="project" value="ProtInc"/>
</dbReference>
<dbReference type="GO" id="GO:0045214">
    <property type="term" value="P:sarcomere organization"/>
    <property type="evidence" value="ECO:0000315"/>
    <property type="project" value="FlyBase"/>
</dbReference>
<dbReference type="CDD" id="cd00063">
    <property type="entry name" value="FN3"/>
    <property type="match status" value="5"/>
</dbReference>
<dbReference type="CDD" id="cd00096">
    <property type="entry name" value="Ig"/>
    <property type="match status" value="1"/>
</dbReference>
<dbReference type="CDD" id="cd05891">
    <property type="entry name" value="IgI_M-protein_C"/>
    <property type="match status" value="1"/>
</dbReference>
<dbReference type="CDD" id="cd20951">
    <property type="entry name" value="IgI_titin_I1-like"/>
    <property type="match status" value="1"/>
</dbReference>
<dbReference type="FunFam" id="2.60.40.10:FF:000069">
    <property type="entry name" value="Alpha-protein kinase 3"/>
    <property type="match status" value="1"/>
</dbReference>
<dbReference type="FunFam" id="2.60.40.10:FF:000029">
    <property type="entry name" value="Myomesin 1"/>
    <property type="match status" value="2"/>
</dbReference>
<dbReference type="FunFam" id="2.60.40.10:FF:000124">
    <property type="entry name" value="Myomesin 1"/>
    <property type="match status" value="1"/>
</dbReference>
<dbReference type="FunFam" id="2.60.40.10:FF:000134">
    <property type="entry name" value="Myomesin 1"/>
    <property type="match status" value="1"/>
</dbReference>
<dbReference type="FunFam" id="2.60.40.10:FF:000192">
    <property type="entry name" value="Myomesin 1"/>
    <property type="match status" value="1"/>
</dbReference>
<dbReference type="FunFam" id="2.60.40.10:FF:000197">
    <property type="entry name" value="Myomesin 1"/>
    <property type="match status" value="1"/>
</dbReference>
<dbReference type="FunFam" id="2.60.40.10:FF:000222">
    <property type="entry name" value="Myomesin 1"/>
    <property type="match status" value="1"/>
</dbReference>
<dbReference type="FunFam" id="2.60.40.10:FF:000233">
    <property type="entry name" value="Myomesin 1"/>
    <property type="match status" value="1"/>
</dbReference>
<dbReference type="FunFam" id="2.60.40.10:FF:002172">
    <property type="entry name" value="Myomesin 1a (skelemin)"/>
    <property type="match status" value="1"/>
</dbReference>
<dbReference type="FunFam" id="2.60.40.10:FF:000179">
    <property type="entry name" value="Myomesin 2"/>
    <property type="match status" value="1"/>
</dbReference>
<dbReference type="FunFam" id="2.60.40.10:FF:000670">
    <property type="entry name" value="Myomesin 2"/>
    <property type="match status" value="1"/>
</dbReference>
<dbReference type="Gene3D" id="2.60.40.10">
    <property type="entry name" value="Immunoglobulins"/>
    <property type="match status" value="12"/>
</dbReference>
<dbReference type="InterPro" id="IPR003961">
    <property type="entry name" value="FN3_dom"/>
</dbReference>
<dbReference type="InterPro" id="IPR036116">
    <property type="entry name" value="FN3_sf"/>
</dbReference>
<dbReference type="InterPro" id="IPR007110">
    <property type="entry name" value="Ig-like_dom"/>
</dbReference>
<dbReference type="InterPro" id="IPR036179">
    <property type="entry name" value="Ig-like_dom_sf"/>
</dbReference>
<dbReference type="InterPro" id="IPR013783">
    <property type="entry name" value="Ig-like_fold"/>
</dbReference>
<dbReference type="InterPro" id="IPR013098">
    <property type="entry name" value="Ig_I-set"/>
</dbReference>
<dbReference type="InterPro" id="IPR003599">
    <property type="entry name" value="Ig_sub"/>
</dbReference>
<dbReference type="InterPro" id="IPR003598">
    <property type="entry name" value="Ig_sub2"/>
</dbReference>
<dbReference type="InterPro" id="IPR050964">
    <property type="entry name" value="Striated_Muscle_Regulatory"/>
</dbReference>
<dbReference type="PANTHER" id="PTHR13817">
    <property type="entry name" value="TITIN"/>
    <property type="match status" value="1"/>
</dbReference>
<dbReference type="PANTHER" id="PTHR13817:SF151">
    <property type="entry name" value="TITIN"/>
    <property type="match status" value="1"/>
</dbReference>
<dbReference type="Pfam" id="PF00041">
    <property type="entry name" value="fn3"/>
    <property type="match status" value="5"/>
</dbReference>
<dbReference type="Pfam" id="PF07679">
    <property type="entry name" value="I-set"/>
    <property type="match status" value="3"/>
</dbReference>
<dbReference type="PRINTS" id="PR00014">
    <property type="entry name" value="FNTYPEIII"/>
</dbReference>
<dbReference type="SMART" id="SM00060">
    <property type="entry name" value="FN3"/>
    <property type="match status" value="5"/>
</dbReference>
<dbReference type="SMART" id="SM00409">
    <property type="entry name" value="IG"/>
    <property type="match status" value="5"/>
</dbReference>
<dbReference type="SMART" id="SM00408">
    <property type="entry name" value="IGc2"/>
    <property type="match status" value="3"/>
</dbReference>
<dbReference type="SUPFAM" id="SSF49265">
    <property type="entry name" value="Fibronectin type III"/>
    <property type="match status" value="3"/>
</dbReference>
<dbReference type="SUPFAM" id="SSF48726">
    <property type="entry name" value="Immunoglobulin"/>
    <property type="match status" value="6"/>
</dbReference>
<dbReference type="PROSITE" id="PS50853">
    <property type="entry name" value="FN3"/>
    <property type="match status" value="5"/>
</dbReference>
<dbReference type="PROSITE" id="PS50835">
    <property type="entry name" value="IG_LIKE"/>
    <property type="match status" value="5"/>
</dbReference>